<feature type="chain" id="PRO_0000073444" description="Alpha-actinin-4">
    <location>
        <begin position="1"/>
        <end position="904"/>
    </location>
</feature>
<feature type="domain" description="Calponin-homology (CH) 1" evidence="4">
    <location>
        <begin position="43"/>
        <end position="147"/>
    </location>
</feature>
<feature type="domain" description="Calponin-homology (CH) 2" evidence="4">
    <location>
        <begin position="156"/>
        <end position="262"/>
    </location>
</feature>
<feature type="repeat" description="Spectrin 1" evidence="3">
    <location>
        <begin position="286"/>
        <end position="396"/>
    </location>
</feature>
<feature type="repeat" description="Spectrin 2" evidence="3">
    <location>
        <begin position="406"/>
        <end position="511"/>
    </location>
</feature>
<feature type="repeat" description="Spectrin 3" evidence="3">
    <location>
        <begin position="521"/>
        <end position="632"/>
    </location>
</feature>
<feature type="repeat" description="Spectrin 4" evidence="3">
    <location>
        <begin position="642"/>
        <end position="745"/>
    </location>
</feature>
<feature type="domain" description="EF-hand 1" evidence="5">
    <location>
        <begin position="758"/>
        <end position="793"/>
    </location>
</feature>
<feature type="domain" description="EF-hand 2" evidence="5">
    <location>
        <begin position="799"/>
        <end position="834"/>
    </location>
</feature>
<feature type="region of interest" description="Actin-binding">
    <location>
        <begin position="1"/>
        <end position="259"/>
    </location>
</feature>
<feature type="region of interest" description="Disordered" evidence="6">
    <location>
        <begin position="1"/>
        <end position="27"/>
    </location>
</feature>
<feature type="binding site" evidence="7">
    <location>
        <position position="771"/>
    </location>
    <ligand>
        <name>Ca(2+)</name>
        <dbReference type="ChEBI" id="CHEBI:29108"/>
        <label>1</label>
    </ligand>
</feature>
<feature type="binding site" evidence="7">
    <location>
        <position position="773"/>
    </location>
    <ligand>
        <name>Ca(2+)</name>
        <dbReference type="ChEBI" id="CHEBI:29108"/>
        <label>1</label>
    </ligand>
</feature>
<feature type="binding site" evidence="7">
    <location>
        <position position="782"/>
    </location>
    <ligand>
        <name>Ca(2+)</name>
        <dbReference type="ChEBI" id="CHEBI:29108"/>
        <label>1</label>
    </ligand>
</feature>
<feature type="binding site" evidence="7">
    <location>
        <position position="812"/>
    </location>
    <ligand>
        <name>Ca(2+)</name>
        <dbReference type="ChEBI" id="CHEBI:29108"/>
        <label>2</label>
    </ligand>
</feature>
<feature type="binding site" evidence="7">
    <location>
        <position position="814"/>
    </location>
    <ligand>
        <name>Ca(2+)</name>
        <dbReference type="ChEBI" id="CHEBI:29108"/>
        <label>2</label>
    </ligand>
</feature>
<feature type="binding site" evidence="7">
    <location>
        <position position="816"/>
    </location>
    <ligand>
        <name>Ca(2+)</name>
        <dbReference type="ChEBI" id="CHEBI:29108"/>
        <label>2</label>
    </ligand>
</feature>
<feature type="binding site" evidence="7">
    <location>
        <position position="818"/>
    </location>
    <ligand>
        <name>Ca(2+)</name>
        <dbReference type="ChEBI" id="CHEBI:29108"/>
        <label>2</label>
    </ligand>
</feature>
<evidence type="ECO:0000250" key="1">
    <source>
        <dbReference type="UniProtKB" id="O43707"/>
    </source>
</evidence>
<evidence type="ECO:0000250" key="2">
    <source>
        <dbReference type="UniProtKB" id="P57780"/>
    </source>
</evidence>
<evidence type="ECO:0000255" key="3"/>
<evidence type="ECO:0000255" key="4">
    <source>
        <dbReference type="PROSITE-ProRule" id="PRU00044"/>
    </source>
</evidence>
<evidence type="ECO:0000255" key="5">
    <source>
        <dbReference type="PROSITE-ProRule" id="PRU00448"/>
    </source>
</evidence>
<evidence type="ECO:0000256" key="6">
    <source>
        <dbReference type="SAM" id="MobiDB-lite"/>
    </source>
</evidence>
<evidence type="ECO:0000305" key="7"/>
<keyword id="KW-0009">Actin-binding</keyword>
<keyword id="KW-0106">Calcium</keyword>
<keyword id="KW-0965">Cell junction</keyword>
<keyword id="KW-0963">Cytoplasm</keyword>
<keyword id="KW-0903">Direct protein sequencing</keyword>
<keyword id="KW-0479">Metal-binding</keyword>
<keyword id="KW-0539">Nucleus</keyword>
<keyword id="KW-0653">Protein transport</keyword>
<keyword id="KW-1185">Reference proteome</keyword>
<keyword id="KW-0677">Repeat</keyword>
<keyword id="KW-0813">Transport</keyword>
<organism>
    <name type="scientific">Gallus gallus</name>
    <name type="common">Chicken</name>
    <dbReference type="NCBI Taxonomy" id="9031"/>
    <lineage>
        <taxon>Eukaryota</taxon>
        <taxon>Metazoa</taxon>
        <taxon>Chordata</taxon>
        <taxon>Craniata</taxon>
        <taxon>Vertebrata</taxon>
        <taxon>Euteleostomi</taxon>
        <taxon>Archelosauria</taxon>
        <taxon>Archosauria</taxon>
        <taxon>Dinosauria</taxon>
        <taxon>Saurischia</taxon>
        <taxon>Theropoda</taxon>
        <taxon>Coelurosauria</taxon>
        <taxon>Aves</taxon>
        <taxon>Neognathae</taxon>
        <taxon>Galloanserae</taxon>
        <taxon>Galliformes</taxon>
        <taxon>Phasianidae</taxon>
        <taxon>Phasianinae</taxon>
        <taxon>Gallus</taxon>
    </lineage>
</organism>
<accession>Q90734</accession>
<reference key="1">
    <citation type="journal article" date="1994" name="Eur. J. Biochem.">
        <title>Molecular cloning of low-Ca(2+)-sensitive-type non-muscle alpha-actinin.</title>
        <authorList>
            <person name="Imamura M."/>
            <person name="Sakurai T."/>
            <person name="Ogawa Y."/>
            <person name="Ishikawa T."/>
            <person name="Goto K."/>
            <person name="Masaki T."/>
        </authorList>
    </citation>
    <scope>NUCLEOTIDE SEQUENCE [MRNA]</scope>
</reference>
<reference key="2">
    <citation type="journal article" date="1992" name="J. Biol. Chem.">
        <title>A novel nonmuscle alpha-actinin. Purification and characterization of chicken lung alpha-actinin.</title>
        <authorList>
            <person name="Imamura M."/>
            <person name="Masaki T."/>
        </authorList>
    </citation>
    <scope>PROTEIN SEQUENCE OF 294-316</scope>
</reference>
<proteinExistence type="evidence at protein level"/>
<name>ACTN4_CHICK</name>
<sequence>MVDYHSAGQPYPYGGNGPGPNGDYMAQEDDWDRDLLLDPAWEKQQRKTFTAWCNSHLRKAGTQIENIDEDFRDGLKLMLLLEVISGERLPKPERGKMRVHKINNVNKALDFIASKGVNVVSIGAEEIVDGNAKMTLGMIWTIILRFAIQDISVEETSAKEGLLLWCQRKTAPYKNVNVQNFHISWKDGLAFNALIHRHRPELIEYDKLRKDDPVTNLNNAFEVAEKYLDIPKMLDAEDIVNTARPDEKAIMTYVSSFYHAFSGAQKAETAANRICKVLAVNQENEHLMEDYEKLASDLLEWIRRTIPWLEDRSPQKTIQEMQQKLEDFRDYRRVHKPPKVQEKCQLEINFNTLQTKLRLSNRPAFMPSEGRMVSDINTGWQHLEQAEKGYEEWLLNEIRRLEPLDHLAEKFRQKASIHEAWTEGKEAMLKQKDYETATLSDIKALIRKHEAFESDLAAHQDRVEQIAAIAQELNELDYYDSPSVNARCQKICDQWDVLGSLTHSRREALEKTEKQLETIDELHLEYAKRAAPFNNWMESAMEDLQDMFIVHTIEEIEGLIAAHDQFKATLPDADREREAILGIQREAQRIADLHSIKLSGNNPYTSVTPQVINSKWERVQQLVPTRDRALQDEQSRQQCNERLRRQFAGQANIVGPWMQTKMEEIGRISIEMHGTLEDQLQHLKHYEQSIVDYKPNLELLEHEHQLVEEALIFDNKHTNYTMEHIRVGWEQLLTTIARTINEVENQILTRDAKGISQEQMQEFRASFNHFDKDHCGALGPEEFKACLISLGYDVENDRQGDAEFNRIMSLVDPNGSGSVTFQAFIDFMSRETTDTDTADQVIASFKVLAGDKNYITAEELRRELPPEQAEYCIARMAPYRGPDAAPGALDYKSFSTALYGESDL</sequence>
<comment type="function">
    <text evidence="1">F-actin cross-linking protein which is thought to anchor actin to a variety of intracellular structures. This is a bundling protein. Probably involved in vesicular trafficking via its association with the CART complex. Involved in tight junction assembly in epithelial cells. May also function as a transcriptional coactivator, stimulating transcription mediated by nuclear hormone receptors.</text>
</comment>
<comment type="subunit">
    <text evidence="1">Homodimer; antiparallel. Component of the CART complex. May interact with nuclear receptors.</text>
</comment>
<comment type="subcellular location">
    <subcellularLocation>
        <location evidence="1">Nucleus</location>
    </subcellularLocation>
    <subcellularLocation>
        <location evidence="1">Cytoplasm</location>
    </subcellularLocation>
    <subcellularLocation>
        <location evidence="2">Cell junction</location>
    </subcellularLocation>
    <subcellularLocation>
        <location evidence="2">Cytoplasm</location>
        <location evidence="2">Perinuclear region</location>
    </subcellularLocation>
</comment>
<comment type="domain">
    <text evidence="1">Contains one Leu-Xaa-Xaa-Leu-Leu (LXXLL) motif that may mediate interaction with nuclear receptors.</text>
</comment>
<comment type="similarity">
    <text evidence="7">Belongs to the alpha-actinin family.</text>
</comment>
<dbReference type="EMBL" id="D26597">
    <property type="protein sequence ID" value="BAA05644.1"/>
    <property type="molecule type" value="mRNA"/>
</dbReference>
<dbReference type="PIR" id="S45673">
    <property type="entry name" value="S45673"/>
</dbReference>
<dbReference type="RefSeq" id="NP_990457.1">
    <property type="nucleotide sequence ID" value="NM_205126.1"/>
</dbReference>
<dbReference type="BMRB" id="Q90734"/>
<dbReference type="SMR" id="Q90734"/>
<dbReference type="FunCoup" id="Q90734">
    <property type="interactions" value="2075"/>
</dbReference>
<dbReference type="STRING" id="9031.ENSGALP00000052757"/>
<dbReference type="PaxDb" id="9031-ENSGALP00000023085"/>
<dbReference type="KEGG" id="gga:396024"/>
<dbReference type="VEuPathDB" id="HostDB:geneid_396024"/>
<dbReference type="eggNOG" id="KOG0035">
    <property type="taxonomic scope" value="Eukaryota"/>
</dbReference>
<dbReference type="InParanoid" id="Q90734"/>
<dbReference type="OrthoDB" id="10017054at2759"/>
<dbReference type="PhylomeDB" id="Q90734"/>
<dbReference type="PRO" id="PR:Q90734"/>
<dbReference type="Proteomes" id="UP000000539">
    <property type="component" value="Unassembled WGS sequence"/>
</dbReference>
<dbReference type="GO" id="GO:0070161">
    <property type="term" value="C:anchoring junction"/>
    <property type="evidence" value="ECO:0007669"/>
    <property type="project" value="UniProtKB-SubCell"/>
</dbReference>
<dbReference type="GO" id="GO:0030054">
    <property type="term" value="C:cell junction"/>
    <property type="evidence" value="ECO:0000318"/>
    <property type="project" value="GO_Central"/>
</dbReference>
<dbReference type="GO" id="GO:0042995">
    <property type="term" value="C:cell projection"/>
    <property type="evidence" value="ECO:0000318"/>
    <property type="project" value="GO_Central"/>
</dbReference>
<dbReference type="GO" id="GO:0030864">
    <property type="term" value="C:cortical actin cytoskeleton"/>
    <property type="evidence" value="ECO:0000318"/>
    <property type="project" value="GO_Central"/>
</dbReference>
<dbReference type="GO" id="GO:0005737">
    <property type="term" value="C:cytoplasm"/>
    <property type="evidence" value="ECO:0000250"/>
    <property type="project" value="UniProtKB"/>
</dbReference>
<dbReference type="GO" id="GO:0005634">
    <property type="term" value="C:nucleus"/>
    <property type="evidence" value="ECO:0000250"/>
    <property type="project" value="UniProtKB"/>
</dbReference>
<dbReference type="GO" id="GO:0048471">
    <property type="term" value="C:perinuclear region of cytoplasm"/>
    <property type="evidence" value="ECO:0000250"/>
    <property type="project" value="UniProtKB"/>
</dbReference>
<dbReference type="GO" id="GO:0005886">
    <property type="term" value="C:plasma membrane"/>
    <property type="evidence" value="ECO:0000318"/>
    <property type="project" value="GO_Central"/>
</dbReference>
<dbReference type="GO" id="GO:0030018">
    <property type="term" value="C:Z disc"/>
    <property type="evidence" value="ECO:0000318"/>
    <property type="project" value="GO_Central"/>
</dbReference>
<dbReference type="GO" id="GO:0051015">
    <property type="term" value="F:actin filament binding"/>
    <property type="evidence" value="ECO:0000318"/>
    <property type="project" value="GO_Central"/>
</dbReference>
<dbReference type="GO" id="GO:0005509">
    <property type="term" value="F:calcium ion binding"/>
    <property type="evidence" value="ECO:0007669"/>
    <property type="project" value="InterPro"/>
</dbReference>
<dbReference type="GO" id="GO:0003713">
    <property type="term" value="F:transcription coactivator activity"/>
    <property type="evidence" value="ECO:0000250"/>
    <property type="project" value="UniProtKB"/>
</dbReference>
<dbReference type="GO" id="GO:0030036">
    <property type="term" value="P:actin cytoskeleton organization"/>
    <property type="evidence" value="ECO:0000318"/>
    <property type="project" value="GO_Central"/>
</dbReference>
<dbReference type="GO" id="GO:0055001">
    <property type="term" value="P:muscle cell development"/>
    <property type="evidence" value="ECO:0000318"/>
    <property type="project" value="GO_Central"/>
</dbReference>
<dbReference type="GO" id="GO:0035357">
    <property type="term" value="P:peroxisome proliferator activated receptor signaling pathway"/>
    <property type="evidence" value="ECO:0000250"/>
    <property type="project" value="UniProtKB"/>
</dbReference>
<dbReference type="GO" id="GO:0045944">
    <property type="term" value="P:positive regulation of transcription by RNA polymerase II"/>
    <property type="evidence" value="ECO:0000250"/>
    <property type="project" value="UniProtKB"/>
</dbReference>
<dbReference type="GO" id="GO:0015031">
    <property type="term" value="P:protein transport"/>
    <property type="evidence" value="ECO:0007669"/>
    <property type="project" value="UniProtKB-KW"/>
</dbReference>
<dbReference type="GO" id="GO:0048384">
    <property type="term" value="P:retinoic acid receptor signaling pathway"/>
    <property type="evidence" value="ECO:0000250"/>
    <property type="project" value="UniProtKB"/>
</dbReference>
<dbReference type="CDD" id="cd21214">
    <property type="entry name" value="CH_ACTN_rpt1"/>
    <property type="match status" value="1"/>
</dbReference>
<dbReference type="CDD" id="cd21216">
    <property type="entry name" value="CH_ACTN_rpt2"/>
    <property type="match status" value="1"/>
</dbReference>
<dbReference type="CDD" id="cd00051">
    <property type="entry name" value="EFh"/>
    <property type="match status" value="1"/>
</dbReference>
<dbReference type="CDD" id="cd00176">
    <property type="entry name" value="SPEC"/>
    <property type="match status" value="3"/>
</dbReference>
<dbReference type="FunFam" id="1.10.238.10:FF:000004">
    <property type="entry name" value="Actinin alpha 1"/>
    <property type="match status" value="1"/>
</dbReference>
<dbReference type="FunFam" id="1.10.418.10:FF:000001">
    <property type="entry name" value="Actinin alpha 1"/>
    <property type="match status" value="1"/>
</dbReference>
<dbReference type="FunFam" id="1.20.58.60:FF:000004">
    <property type="entry name" value="Actinin alpha 1"/>
    <property type="match status" value="1"/>
</dbReference>
<dbReference type="FunFam" id="1.20.58.60:FF:000005">
    <property type="entry name" value="Actinin alpha 1"/>
    <property type="match status" value="1"/>
</dbReference>
<dbReference type="FunFam" id="1.10.418.10:FF:000005">
    <property type="entry name" value="Actinin alpha 4"/>
    <property type="match status" value="1"/>
</dbReference>
<dbReference type="FunFam" id="1.10.238.10:FF:000018">
    <property type="entry name" value="Actinin, alpha 1"/>
    <property type="match status" value="1"/>
</dbReference>
<dbReference type="FunFam" id="1.20.58.60:FF:000002">
    <property type="entry name" value="Actinin, alpha 1"/>
    <property type="match status" value="1"/>
</dbReference>
<dbReference type="FunFam" id="1.20.58.60:FF:000003">
    <property type="entry name" value="Actinin, alpha 1"/>
    <property type="match status" value="1"/>
</dbReference>
<dbReference type="Gene3D" id="1.20.58.60">
    <property type="match status" value="4"/>
</dbReference>
<dbReference type="Gene3D" id="1.10.418.10">
    <property type="entry name" value="Calponin-like domain"/>
    <property type="match status" value="2"/>
</dbReference>
<dbReference type="Gene3D" id="1.10.238.10">
    <property type="entry name" value="EF-hand"/>
    <property type="match status" value="2"/>
</dbReference>
<dbReference type="InterPro" id="IPR001589">
    <property type="entry name" value="Actinin_actin-bd_CS"/>
</dbReference>
<dbReference type="InterPro" id="IPR001715">
    <property type="entry name" value="CH_dom"/>
</dbReference>
<dbReference type="InterPro" id="IPR036872">
    <property type="entry name" value="CH_dom_sf"/>
</dbReference>
<dbReference type="InterPro" id="IPR011992">
    <property type="entry name" value="EF-hand-dom_pair"/>
</dbReference>
<dbReference type="InterPro" id="IPR014837">
    <property type="entry name" value="EF-hand_Ca_insen"/>
</dbReference>
<dbReference type="InterPro" id="IPR002048">
    <property type="entry name" value="EF_hand_dom"/>
</dbReference>
<dbReference type="InterPro" id="IPR018159">
    <property type="entry name" value="Spectrin/alpha-actinin"/>
</dbReference>
<dbReference type="InterPro" id="IPR002017">
    <property type="entry name" value="Spectrin_repeat"/>
</dbReference>
<dbReference type="PANTHER" id="PTHR11915">
    <property type="entry name" value="SPECTRIN/FILAMIN RELATED CYTOSKELETAL PROTEIN"/>
    <property type="match status" value="1"/>
</dbReference>
<dbReference type="Pfam" id="PF00307">
    <property type="entry name" value="CH"/>
    <property type="match status" value="2"/>
</dbReference>
<dbReference type="Pfam" id="PF08726">
    <property type="entry name" value="EFhand_Ca_insen"/>
    <property type="match status" value="1"/>
</dbReference>
<dbReference type="Pfam" id="PF00435">
    <property type="entry name" value="Spectrin"/>
    <property type="match status" value="4"/>
</dbReference>
<dbReference type="SMART" id="SM00033">
    <property type="entry name" value="CH"/>
    <property type="match status" value="2"/>
</dbReference>
<dbReference type="SMART" id="SM00054">
    <property type="entry name" value="EFh"/>
    <property type="match status" value="2"/>
</dbReference>
<dbReference type="SMART" id="SM01184">
    <property type="entry name" value="efhand_Ca_insen"/>
    <property type="match status" value="1"/>
</dbReference>
<dbReference type="SMART" id="SM00150">
    <property type="entry name" value="SPEC"/>
    <property type="match status" value="4"/>
</dbReference>
<dbReference type="SUPFAM" id="SSF47576">
    <property type="entry name" value="Calponin-homology domain, CH-domain"/>
    <property type="match status" value="1"/>
</dbReference>
<dbReference type="SUPFAM" id="SSF47473">
    <property type="entry name" value="EF-hand"/>
    <property type="match status" value="1"/>
</dbReference>
<dbReference type="SUPFAM" id="SSF46966">
    <property type="entry name" value="Spectrin repeat"/>
    <property type="match status" value="4"/>
</dbReference>
<dbReference type="PROSITE" id="PS00019">
    <property type="entry name" value="ACTININ_1"/>
    <property type="match status" value="1"/>
</dbReference>
<dbReference type="PROSITE" id="PS00020">
    <property type="entry name" value="ACTININ_2"/>
    <property type="match status" value="1"/>
</dbReference>
<dbReference type="PROSITE" id="PS50021">
    <property type="entry name" value="CH"/>
    <property type="match status" value="2"/>
</dbReference>
<dbReference type="PROSITE" id="PS50222">
    <property type="entry name" value="EF_HAND_2"/>
    <property type="match status" value="2"/>
</dbReference>
<protein>
    <recommendedName>
        <fullName evidence="7">Alpha-actinin-4</fullName>
    </recommendedName>
    <alternativeName>
        <fullName evidence="7">Non-muscle alpha-actinin 4</fullName>
    </alternativeName>
</protein>
<gene>
    <name evidence="7" type="primary">ACTN4</name>
</gene>